<sequence length="368" mass="41074">MTAIIELNNLSVQFHQKGRLVTAVKDATLHIEKGDIYGVIGYSGAGKSTLVRTINLLQKPTKGQIVINGEKIFDSENPVKFTGAKLREFRQKIGMIFQHFNLLSEKTVFNNVAFALQHSQIEDKNGKKRYLTKKEKTDKVTELLKLVDLEELSDKYPAQLSGGQKQRVAIARALANDPEILISDEGTSALDPKTTNQILDLLKSLHEKLGITVVLITHEMQVVKEIANKVAVMQNGEIIEQNSLIDIFAQPKEALTKQFIETTSSVNRFIASLSRTELLAQLADDEELIHLDYSGSELEDPVVSDITKKFDVTTNIFYGNVELLQGQPFGSLVLTLKGSSEHRAAAKAYFVERHLKFEVLGKIERTVD</sequence>
<feature type="chain" id="PRO_0000270321" description="Methionine import ATP-binding protein MetN">
    <location>
        <begin position="1"/>
        <end position="368"/>
    </location>
</feature>
<feature type="domain" description="ABC transporter" evidence="1">
    <location>
        <begin position="5"/>
        <end position="260"/>
    </location>
</feature>
<feature type="binding site" evidence="1">
    <location>
        <begin position="41"/>
        <end position="48"/>
    </location>
    <ligand>
        <name>ATP</name>
        <dbReference type="ChEBI" id="CHEBI:30616"/>
    </ligand>
</feature>
<proteinExistence type="inferred from homology"/>
<protein>
    <recommendedName>
        <fullName evidence="1">Methionine import ATP-binding protein MetN</fullName>
        <ecNumber evidence="1">7.4.2.11</ecNumber>
    </recommendedName>
</protein>
<dbReference type="EC" id="7.4.2.11" evidence="1"/>
<dbReference type="EMBL" id="AE005176">
    <property type="protein sequence ID" value="AAK04420.1"/>
    <property type="molecule type" value="Genomic_DNA"/>
</dbReference>
<dbReference type="PIR" id="B86665">
    <property type="entry name" value="B86665"/>
</dbReference>
<dbReference type="RefSeq" id="NP_266478.1">
    <property type="nucleotide sequence ID" value="NC_002662.1"/>
</dbReference>
<dbReference type="RefSeq" id="WP_003131670.1">
    <property type="nucleotide sequence ID" value="NC_002662.1"/>
</dbReference>
<dbReference type="SMR" id="Q9CIN4"/>
<dbReference type="PaxDb" id="272623-L121289"/>
<dbReference type="EnsemblBacteria" id="AAK04420">
    <property type="protein sequence ID" value="AAK04420"/>
    <property type="gene ID" value="L121289"/>
</dbReference>
<dbReference type="KEGG" id="lla:L121289"/>
<dbReference type="PATRIC" id="fig|272623.7.peg.353"/>
<dbReference type="eggNOG" id="COG1135">
    <property type="taxonomic scope" value="Bacteria"/>
</dbReference>
<dbReference type="HOGENOM" id="CLU_000604_1_3_9"/>
<dbReference type="OrthoDB" id="9802264at2"/>
<dbReference type="Proteomes" id="UP000002196">
    <property type="component" value="Chromosome"/>
</dbReference>
<dbReference type="GO" id="GO:0005886">
    <property type="term" value="C:plasma membrane"/>
    <property type="evidence" value="ECO:0007669"/>
    <property type="project" value="UniProtKB-SubCell"/>
</dbReference>
<dbReference type="GO" id="GO:0033232">
    <property type="term" value="F:ABC-type D-methionine transporter activity"/>
    <property type="evidence" value="ECO:0007669"/>
    <property type="project" value="UniProtKB-EC"/>
</dbReference>
<dbReference type="GO" id="GO:0005524">
    <property type="term" value="F:ATP binding"/>
    <property type="evidence" value="ECO:0007669"/>
    <property type="project" value="UniProtKB-KW"/>
</dbReference>
<dbReference type="GO" id="GO:0016887">
    <property type="term" value="F:ATP hydrolysis activity"/>
    <property type="evidence" value="ECO:0007669"/>
    <property type="project" value="InterPro"/>
</dbReference>
<dbReference type="CDD" id="cd03258">
    <property type="entry name" value="ABC_MetN_methionine_transporter"/>
    <property type="match status" value="1"/>
</dbReference>
<dbReference type="Gene3D" id="3.30.70.260">
    <property type="match status" value="1"/>
</dbReference>
<dbReference type="Gene3D" id="3.40.50.300">
    <property type="entry name" value="P-loop containing nucleotide triphosphate hydrolases"/>
    <property type="match status" value="1"/>
</dbReference>
<dbReference type="InterPro" id="IPR003593">
    <property type="entry name" value="AAA+_ATPase"/>
</dbReference>
<dbReference type="InterPro" id="IPR003439">
    <property type="entry name" value="ABC_transporter-like_ATP-bd"/>
</dbReference>
<dbReference type="InterPro" id="IPR017871">
    <property type="entry name" value="ABC_transporter-like_CS"/>
</dbReference>
<dbReference type="InterPro" id="IPR045865">
    <property type="entry name" value="ACT-like_dom_sf"/>
</dbReference>
<dbReference type="InterPro" id="IPR041701">
    <property type="entry name" value="MetN_ABC"/>
</dbReference>
<dbReference type="InterPro" id="IPR050086">
    <property type="entry name" value="MetN_ABC_transporter-like"/>
</dbReference>
<dbReference type="InterPro" id="IPR018449">
    <property type="entry name" value="NIL_domain"/>
</dbReference>
<dbReference type="InterPro" id="IPR027417">
    <property type="entry name" value="P-loop_NTPase"/>
</dbReference>
<dbReference type="PANTHER" id="PTHR43166">
    <property type="entry name" value="AMINO ACID IMPORT ATP-BINDING PROTEIN"/>
    <property type="match status" value="1"/>
</dbReference>
<dbReference type="PANTHER" id="PTHR43166:SF30">
    <property type="entry name" value="METHIONINE IMPORT ATP-BINDING PROTEIN METN"/>
    <property type="match status" value="1"/>
</dbReference>
<dbReference type="Pfam" id="PF00005">
    <property type="entry name" value="ABC_tran"/>
    <property type="match status" value="1"/>
</dbReference>
<dbReference type="Pfam" id="PF09383">
    <property type="entry name" value="NIL"/>
    <property type="match status" value="1"/>
</dbReference>
<dbReference type="SMART" id="SM00382">
    <property type="entry name" value="AAA"/>
    <property type="match status" value="1"/>
</dbReference>
<dbReference type="SMART" id="SM00930">
    <property type="entry name" value="NIL"/>
    <property type="match status" value="1"/>
</dbReference>
<dbReference type="SUPFAM" id="SSF55021">
    <property type="entry name" value="ACT-like"/>
    <property type="match status" value="1"/>
</dbReference>
<dbReference type="SUPFAM" id="SSF52540">
    <property type="entry name" value="P-loop containing nucleoside triphosphate hydrolases"/>
    <property type="match status" value="1"/>
</dbReference>
<dbReference type="PROSITE" id="PS00211">
    <property type="entry name" value="ABC_TRANSPORTER_1"/>
    <property type="match status" value="1"/>
</dbReference>
<dbReference type="PROSITE" id="PS50893">
    <property type="entry name" value="ABC_TRANSPORTER_2"/>
    <property type="match status" value="1"/>
</dbReference>
<dbReference type="PROSITE" id="PS51264">
    <property type="entry name" value="METN"/>
    <property type="match status" value="1"/>
</dbReference>
<comment type="function">
    <text evidence="1">Part of the ABC transporter complex MetNIQ involved in methionine import. Responsible for energy coupling to the transport system.</text>
</comment>
<comment type="catalytic activity">
    <reaction evidence="1">
        <text>L-methionine(out) + ATP + H2O = L-methionine(in) + ADP + phosphate + H(+)</text>
        <dbReference type="Rhea" id="RHEA:29779"/>
        <dbReference type="ChEBI" id="CHEBI:15377"/>
        <dbReference type="ChEBI" id="CHEBI:15378"/>
        <dbReference type="ChEBI" id="CHEBI:30616"/>
        <dbReference type="ChEBI" id="CHEBI:43474"/>
        <dbReference type="ChEBI" id="CHEBI:57844"/>
        <dbReference type="ChEBI" id="CHEBI:456216"/>
        <dbReference type="EC" id="7.4.2.11"/>
    </reaction>
</comment>
<comment type="catalytic activity">
    <reaction evidence="1">
        <text>D-methionine(out) + ATP + H2O = D-methionine(in) + ADP + phosphate + H(+)</text>
        <dbReference type="Rhea" id="RHEA:29767"/>
        <dbReference type="ChEBI" id="CHEBI:15377"/>
        <dbReference type="ChEBI" id="CHEBI:15378"/>
        <dbReference type="ChEBI" id="CHEBI:30616"/>
        <dbReference type="ChEBI" id="CHEBI:43474"/>
        <dbReference type="ChEBI" id="CHEBI:57932"/>
        <dbReference type="ChEBI" id="CHEBI:456216"/>
        <dbReference type="EC" id="7.4.2.11"/>
    </reaction>
</comment>
<comment type="subunit">
    <text evidence="1">The complex is composed of two ATP-binding proteins (MetN), two transmembrane proteins (MetI) and a solute-binding protein (MetQ).</text>
</comment>
<comment type="subcellular location">
    <subcellularLocation>
        <location evidence="1">Cell membrane</location>
        <topology evidence="1">Peripheral membrane protein</topology>
    </subcellularLocation>
</comment>
<comment type="similarity">
    <text evidence="1">Belongs to the ABC transporter superfamily. Methionine importer (TC 3.A.1.24) family.</text>
</comment>
<keyword id="KW-0029">Amino-acid transport</keyword>
<keyword id="KW-0067">ATP-binding</keyword>
<keyword id="KW-1003">Cell membrane</keyword>
<keyword id="KW-0472">Membrane</keyword>
<keyword id="KW-0547">Nucleotide-binding</keyword>
<keyword id="KW-1185">Reference proteome</keyword>
<keyword id="KW-1278">Translocase</keyword>
<keyword id="KW-0813">Transport</keyword>
<gene>
    <name evidence="1" type="primary">metN</name>
    <name type="ordered locus">LL0322</name>
    <name type="ORF">L121289</name>
</gene>
<reference key="1">
    <citation type="journal article" date="2001" name="Genome Res.">
        <title>The complete genome sequence of the lactic acid bacterium Lactococcus lactis ssp. lactis IL1403.</title>
        <authorList>
            <person name="Bolotin A."/>
            <person name="Wincker P."/>
            <person name="Mauger S."/>
            <person name="Jaillon O."/>
            <person name="Malarme K."/>
            <person name="Weissenbach J."/>
            <person name="Ehrlich S.D."/>
            <person name="Sorokin A."/>
        </authorList>
    </citation>
    <scope>NUCLEOTIDE SEQUENCE [LARGE SCALE GENOMIC DNA]</scope>
    <source>
        <strain>IL1403</strain>
    </source>
</reference>
<organism>
    <name type="scientific">Lactococcus lactis subsp. lactis (strain IL1403)</name>
    <name type="common">Streptococcus lactis</name>
    <dbReference type="NCBI Taxonomy" id="272623"/>
    <lineage>
        <taxon>Bacteria</taxon>
        <taxon>Bacillati</taxon>
        <taxon>Bacillota</taxon>
        <taxon>Bacilli</taxon>
        <taxon>Lactobacillales</taxon>
        <taxon>Streptococcaceae</taxon>
        <taxon>Lactococcus</taxon>
    </lineage>
</organism>
<accession>Q9CIN4</accession>
<evidence type="ECO:0000255" key="1">
    <source>
        <dbReference type="HAMAP-Rule" id="MF_01719"/>
    </source>
</evidence>
<name>METN_LACLA</name>